<gene>
    <name evidence="1" type="primary">lspA</name>
    <name type="ordered locus">ESA_03311</name>
</gene>
<reference key="1">
    <citation type="journal article" date="2010" name="PLoS ONE">
        <title>Genome sequence of Cronobacter sakazakii BAA-894 and comparative genomic hybridization analysis with other Cronobacter species.</title>
        <authorList>
            <person name="Kucerova E."/>
            <person name="Clifton S.W."/>
            <person name="Xia X.Q."/>
            <person name="Long F."/>
            <person name="Porwollik S."/>
            <person name="Fulton L."/>
            <person name="Fronick C."/>
            <person name="Minx P."/>
            <person name="Kyung K."/>
            <person name="Warren W."/>
            <person name="Fulton R."/>
            <person name="Feng D."/>
            <person name="Wollam A."/>
            <person name="Shah N."/>
            <person name="Bhonagiri V."/>
            <person name="Nash W.E."/>
            <person name="Hallsworth-Pepin K."/>
            <person name="Wilson R.K."/>
            <person name="McClelland M."/>
            <person name="Forsythe S.J."/>
        </authorList>
    </citation>
    <scope>NUCLEOTIDE SEQUENCE [LARGE SCALE GENOMIC DNA]</scope>
    <source>
        <strain>ATCC BAA-894</strain>
    </source>
</reference>
<accession>A7MIM2</accession>
<proteinExistence type="inferred from homology"/>
<comment type="function">
    <text evidence="1">This protein specifically catalyzes the removal of signal peptides from prolipoproteins.</text>
</comment>
<comment type="catalytic activity">
    <reaction evidence="1">
        <text>Release of signal peptides from bacterial membrane prolipoproteins. Hydrolyzes -Xaa-Yaa-Zaa-|-(S,diacylglyceryl)Cys-, in which Xaa is hydrophobic (preferably Leu), and Yaa (Ala or Ser) and Zaa (Gly or Ala) have small, neutral side chains.</text>
        <dbReference type="EC" id="3.4.23.36"/>
    </reaction>
</comment>
<comment type="pathway">
    <text evidence="1">Protein modification; lipoprotein biosynthesis (signal peptide cleavage).</text>
</comment>
<comment type="subcellular location">
    <subcellularLocation>
        <location evidence="1">Cell inner membrane</location>
        <topology evidence="1">Multi-pass membrane protein</topology>
    </subcellularLocation>
</comment>
<comment type="similarity">
    <text evidence="1">Belongs to the peptidase A8 family.</text>
</comment>
<evidence type="ECO:0000255" key="1">
    <source>
        <dbReference type="HAMAP-Rule" id="MF_00161"/>
    </source>
</evidence>
<dbReference type="EC" id="3.4.23.36" evidence="1"/>
<dbReference type="EMBL" id="CP000783">
    <property type="protein sequence ID" value="ABU78532.1"/>
    <property type="molecule type" value="Genomic_DNA"/>
</dbReference>
<dbReference type="RefSeq" id="WP_007864145.1">
    <property type="nucleotide sequence ID" value="NC_009778.1"/>
</dbReference>
<dbReference type="SMR" id="A7MIM2"/>
<dbReference type="MEROPS" id="A08.001"/>
<dbReference type="GeneID" id="56731993"/>
<dbReference type="KEGG" id="esa:ESA_03311"/>
<dbReference type="HOGENOM" id="CLU_083252_4_0_6"/>
<dbReference type="UniPathway" id="UPA00665"/>
<dbReference type="Proteomes" id="UP000000260">
    <property type="component" value="Chromosome"/>
</dbReference>
<dbReference type="GO" id="GO:0005886">
    <property type="term" value="C:plasma membrane"/>
    <property type="evidence" value="ECO:0007669"/>
    <property type="project" value="UniProtKB-SubCell"/>
</dbReference>
<dbReference type="GO" id="GO:0004190">
    <property type="term" value="F:aspartic-type endopeptidase activity"/>
    <property type="evidence" value="ECO:0007669"/>
    <property type="project" value="UniProtKB-UniRule"/>
</dbReference>
<dbReference type="GO" id="GO:0006508">
    <property type="term" value="P:proteolysis"/>
    <property type="evidence" value="ECO:0007669"/>
    <property type="project" value="UniProtKB-KW"/>
</dbReference>
<dbReference type="HAMAP" id="MF_00161">
    <property type="entry name" value="LspA"/>
    <property type="match status" value="1"/>
</dbReference>
<dbReference type="InterPro" id="IPR001872">
    <property type="entry name" value="Peptidase_A8"/>
</dbReference>
<dbReference type="NCBIfam" id="TIGR00077">
    <property type="entry name" value="lspA"/>
    <property type="match status" value="1"/>
</dbReference>
<dbReference type="PANTHER" id="PTHR33695">
    <property type="entry name" value="LIPOPROTEIN SIGNAL PEPTIDASE"/>
    <property type="match status" value="1"/>
</dbReference>
<dbReference type="PANTHER" id="PTHR33695:SF1">
    <property type="entry name" value="LIPOPROTEIN SIGNAL PEPTIDASE"/>
    <property type="match status" value="1"/>
</dbReference>
<dbReference type="Pfam" id="PF01252">
    <property type="entry name" value="Peptidase_A8"/>
    <property type="match status" value="1"/>
</dbReference>
<dbReference type="PRINTS" id="PR00781">
    <property type="entry name" value="LIPOSIGPTASE"/>
</dbReference>
<dbReference type="PROSITE" id="PS00855">
    <property type="entry name" value="SPASE_II"/>
    <property type="match status" value="1"/>
</dbReference>
<name>LSPA_CROS8</name>
<keyword id="KW-0064">Aspartyl protease</keyword>
<keyword id="KW-0997">Cell inner membrane</keyword>
<keyword id="KW-1003">Cell membrane</keyword>
<keyword id="KW-0378">Hydrolase</keyword>
<keyword id="KW-0472">Membrane</keyword>
<keyword id="KW-0645">Protease</keyword>
<keyword id="KW-1185">Reference proteome</keyword>
<keyword id="KW-0812">Transmembrane</keyword>
<keyword id="KW-1133">Transmembrane helix</keyword>
<organism>
    <name type="scientific">Cronobacter sakazakii (strain ATCC BAA-894)</name>
    <name type="common">Enterobacter sakazakii</name>
    <dbReference type="NCBI Taxonomy" id="290339"/>
    <lineage>
        <taxon>Bacteria</taxon>
        <taxon>Pseudomonadati</taxon>
        <taxon>Pseudomonadota</taxon>
        <taxon>Gammaproteobacteria</taxon>
        <taxon>Enterobacterales</taxon>
        <taxon>Enterobacteriaceae</taxon>
        <taxon>Cronobacter</taxon>
    </lineage>
</organism>
<sequence length="165" mass="18169">MSKPILSTGLRWLWLVVVVLIVDLGSKALILQHFALGETVSLFPSLNLHYARNYGAAFSFLADKGGWQRWFFAGIAIGICVLLVVMMYRAKASQKLNNIAYALIIGGALGNLFDRLWHGFVVDMIDFYVGDWHFATFNLADTAICIGAALVVLEGFLPSKQKATA</sequence>
<feature type="chain" id="PRO_1000038802" description="Lipoprotein signal peptidase">
    <location>
        <begin position="1"/>
        <end position="165"/>
    </location>
</feature>
<feature type="transmembrane region" description="Helical" evidence="1">
    <location>
        <begin position="12"/>
        <end position="32"/>
    </location>
</feature>
<feature type="transmembrane region" description="Helical" evidence="1">
    <location>
        <begin position="70"/>
        <end position="90"/>
    </location>
</feature>
<feature type="transmembrane region" description="Helical" evidence="1">
    <location>
        <begin position="102"/>
        <end position="122"/>
    </location>
</feature>
<feature type="transmembrane region" description="Helical" evidence="1">
    <location>
        <begin position="137"/>
        <end position="157"/>
    </location>
</feature>
<feature type="active site" evidence="1">
    <location>
        <position position="123"/>
    </location>
</feature>
<feature type="active site" evidence="1">
    <location>
        <position position="141"/>
    </location>
</feature>
<protein>
    <recommendedName>
        <fullName evidence="1">Lipoprotein signal peptidase</fullName>
        <ecNumber evidence="1">3.4.23.36</ecNumber>
    </recommendedName>
    <alternativeName>
        <fullName evidence="1">Prolipoprotein signal peptidase</fullName>
    </alternativeName>
    <alternativeName>
        <fullName evidence="1">Signal peptidase II</fullName>
        <shortName evidence="1">SPase II</shortName>
    </alternativeName>
</protein>